<feature type="chain" id="PRO_1000051232" description="Small ribosomal subunit protein uS9">
    <location>
        <begin position="1"/>
        <end position="129"/>
    </location>
</feature>
<comment type="similarity">
    <text evidence="1">Belongs to the universal ribosomal protein uS9 family.</text>
</comment>
<sequence>MRKIYATGKRKTAIAKVWLTPGKGELSINEQSLNQWLGGHEAIKMKVMQPLLLTKQEQSVDIKAVVFGGGYSAQAEALRHGISKALNAYDIVFRAILKPKGLLTRDSRVVERKKYGKRKARRSPQFSKR</sequence>
<organism>
    <name type="scientific">Helicobacter acinonychis (strain Sheeba)</name>
    <dbReference type="NCBI Taxonomy" id="382638"/>
    <lineage>
        <taxon>Bacteria</taxon>
        <taxon>Pseudomonadati</taxon>
        <taxon>Campylobacterota</taxon>
        <taxon>Epsilonproteobacteria</taxon>
        <taxon>Campylobacterales</taxon>
        <taxon>Helicobacteraceae</taxon>
        <taxon>Helicobacter</taxon>
    </lineage>
</organism>
<protein>
    <recommendedName>
        <fullName evidence="1">Small ribosomal subunit protein uS9</fullName>
    </recommendedName>
    <alternativeName>
        <fullName evidence="2">30S ribosomal protein S9</fullName>
    </alternativeName>
</protein>
<reference key="1">
    <citation type="journal article" date="2006" name="PLoS Genet.">
        <title>Who ate whom? Adaptive Helicobacter genomic changes that accompanied a host jump from early humans to large felines.</title>
        <authorList>
            <person name="Eppinger M."/>
            <person name="Baar C."/>
            <person name="Linz B."/>
            <person name="Raddatz G."/>
            <person name="Lanz C."/>
            <person name="Keller H."/>
            <person name="Morelli G."/>
            <person name="Gressmann H."/>
            <person name="Achtman M."/>
            <person name="Schuster S.C."/>
        </authorList>
    </citation>
    <scope>NUCLEOTIDE SEQUENCE [LARGE SCALE GENOMIC DNA]</scope>
    <source>
        <strain>Sheeba</strain>
    </source>
</reference>
<gene>
    <name evidence="1" type="primary">rpsI</name>
    <name type="ordered locus">Hac_1522</name>
</gene>
<evidence type="ECO:0000255" key="1">
    <source>
        <dbReference type="HAMAP-Rule" id="MF_00532"/>
    </source>
</evidence>
<evidence type="ECO:0000305" key="2"/>
<proteinExistence type="inferred from homology"/>
<name>RS9_HELAH</name>
<keyword id="KW-0687">Ribonucleoprotein</keyword>
<keyword id="KW-0689">Ribosomal protein</keyword>
<dbReference type="EMBL" id="AM260522">
    <property type="protein sequence ID" value="CAK00242.1"/>
    <property type="molecule type" value="Genomic_DNA"/>
</dbReference>
<dbReference type="RefSeq" id="WP_011578329.1">
    <property type="nucleotide sequence ID" value="NC_008229.1"/>
</dbReference>
<dbReference type="SMR" id="Q17VT4"/>
<dbReference type="STRING" id="382638.Hac_1522"/>
<dbReference type="GeneID" id="31758792"/>
<dbReference type="KEGG" id="hac:Hac_1522"/>
<dbReference type="eggNOG" id="COG0103">
    <property type="taxonomic scope" value="Bacteria"/>
</dbReference>
<dbReference type="HOGENOM" id="CLU_046483_2_1_7"/>
<dbReference type="OrthoDB" id="9803965at2"/>
<dbReference type="BioCyc" id="HACI382638:HAC_RS06455-MONOMER"/>
<dbReference type="Proteomes" id="UP000000775">
    <property type="component" value="Chromosome"/>
</dbReference>
<dbReference type="GO" id="GO:0022627">
    <property type="term" value="C:cytosolic small ribosomal subunit"/>
    <property type="evidence" value="ECO:0007669"/>
    <property type="project" value="TreeGrafter"/>
</dbReference>
<dbReference type="GO" id="GO:0003723">
    <property type="term" value="F:RNA binding"/>
    <property type="evidence" value="ECO:0007669"/>
    <property type="project" value="TreeGrafter"/>
</dbReference>
<dbReference type="GO" id="GO:0003735">
    <property type="term" value="F:structural constituent of ribosome"/>
    <property type="evidence" value="ECO:0007669"/>
    <property type="project" value="InterPro"/>
</dbReference>
<dbReference type="GO" id="GO:0006412">
    <property type="term" value="P:translation"/>
    <property type="evidence" value="ECO:0007669"/>
    <property type="project" value="UniProtKB-UniRule"/>
</dbReference>
<dbReference type="FunFam" id="3.30.230.10:FF:000025">
    <property type="entry name" value="30S ribosomal protein S9"/>
    <property type="match status" value="1"/>
</dbReference>
<dbReference type="Gene3D" id="3.30.230.10">
    <property type="match status" value="1"/>
</dbReference>
<dbReference type="HAMAP" id="MF_00532_B">
    <property type="entry name" value="Ribosomal_uS9_B"/>
    <property type="match status" value="1"/>
</dbReference>
<dbReference type="InterPro" id="IPR020568">
    <property type="entry name" value="Ribosomal_Su5_D2-typ_SF"/>
</dbReference>
<dbReference type="InterPro" id="IPR000754">
    <property type="entry name" value="Ribosomal_uS9"/>
</dbReference>
<dbReference type="InterPro" id="IPR023035">
    <property type="entry name" value="Ribosomal_uS9_bac/plastid"/>
</dbReference>
<dbReference type="InterPro" id="IPR020574">
    <property type="entry name" value="Ribosomal_uS9_CS"/>
</dbReference>
<dbReference type="InterPro" id="IPR014721">
    <property type="entry name" value="Ribsml_uS5_D2-typ_fold_subgr"/>
</dbReference>
<dbReference type="NCBIfam" id="NF001099">
    <property type="entry name" value="PRK00132.1"/>
    <property type="match status" value="1"/>
</dbReference>
<dbReference type="PANTHER" id="PTHR21569">
    <property type="entry name" value="RIBOSOMAL PROTEIN S9"/>
    <property type="match status" value="1"/>
</dbReference>
<dbReference type="PANTHER" id="PTHR21569:SF1">
    <property type="entry name" value="SMALL RIBOSOMAL SUBUNIT PROTEIN US9M"/>
    <property type="match status" value="1"/>
</dbReference>
<dbReference type="Pfam" id="PF00380">
    <property type="entry name" value="Ribosomal_S9"/>
    <property type="match status" value="1"/>
</dbReference>
<dbReference type="SUPFAM" id="SSF54211">
    <property type="entry name" value="Ribosomal protein S5 domain 2-like"/>
    <property type="match status" value="1"/>
</dbReference>
<dbReference type="PROSITE" id="PS00360">
    <property type="entry name" value="RIBOSOMAL_S9"/>
    <property type="match status" value="1"/>
</dbReference>
<accession>Q17VT4</accession>